<feature type="chain" id="PRO_1000023366" description="Translational regulator CsrA">
    <location>
        <begin position="1"/>
        <end position="59"/>
    </location>
</feature>
<name>CSRA_BUCCC</name>
<dbReference type="EMBL" id="CP000263">
    <property type="protein sequence ID" value="ABJ90722.1"/>
    <property type="molecule type" value="Genomic_DNA"/>
</dbReference>
<dbReference type="RefSeq" id="WP_011672641.1">
    <property type="nucleotide sequence ID" value="NC_008513.1"/>
</dbReference>
<dbReference type="SMR" id="Q057H7"/>
<dbReference type="STRING" id="372461.BCc_255"/>
<dbReference type="KEGG" id="bcc:BCc_255"/>
<dbReference type="eggNOG" id="COG1551">
    <property type="taxonomic scope" value="Bacteria"/>
</dbReference>
<dbReference type="HOGENOM" id="CLU_164837_2_1_6"/>
<dbReference type="OrthoDB" id="9809061at2"/>
<dbReference type="Proteomes" id="UP000000669">
    <property type="component" value="Chromosome"/>
</dbReference>
<dbReference type="GO" id="GO:0005829">
    <property type="term" value="C:cytosol"/>
    <property type="evidence" value="ECO:0007669"/>
    <property type="project" value="TreeGrafter"/>
</dbReference>
<dbReference type="GO" id="GO:0048027">
    <property type="term" value="F:mRNA 5'-UTR binding"/>
    <property type="evidence" value="ECO:0007669"/>
    <property type="project" value="UniProtKB-UniRule"/>
</dbReference>
<dbReference type="GO" id="GO:0006402">
    <property type="term" value="P:mRNA catabolic process"/>
    <property type="evidence" value="ECO:0007669"/>
    <property type="project" value="InterPro"/>
</dbReference>
<dbReference type="GO" id="GO:0045947">
    <property type="term" value="P:negative regulation of translational initiation"/>
    <property type="evidence" value="ECO:0007669"/>
    <property type="project" value="UniProtKB-UniRule"/>
</dbReference>
<dbReference type="GO" id="GO:0045948">
    <property type="term" value="P:positive regulation of translational initiation"/>
    <property type="evidence" value="ECO:0007669"/>
    <property type="project" value="UniProtKB-UniRule"/>
</dbReference>
<dbReference type="GO" id="GO:0006109">
    <property type="term" value="P:regulation of carbohydrate metabolic process"/>
    <property type="evidence" value="ECO:0007669"/>
    <property type="project" value="UniProtKB-UniRule"/>
</dbReference>
<dbReference type="FunFam" id="2.60.40.4380:FF:000001">
    <property type="entry name" value="Translational regulator CsrA"/>
    <property type="match status" value="1"/>
</dbReference>
<dbReference type="Gene3D" id="2.60.40.4380">
    <property type="entry name" value="Translational regulator CsrA"/>
    <property type="match status" value="1"/>
</dbReference>
<dbReference type="HAMAP" id="MF_00167">
    <property type="entry name" value="CsrA"/>
    <property type="match status" value="1"/>
</dbReference>
<dbReference type="InterPro" id="IPR003751">
    <property type="entry name" value="CsrA"/>
</dbReference>
<dbReference type="InterPro" id="IPR036107">
    <property type="entry name" value="CsrA_sf"/>
</dbReference>
<dbReference type="NCBIfam" id="TIGR00202">
    <property type="entry name" value="csrA"/>
    <property type="match status" value="1"/>
</dbReference>
<dbReference type="NCBIfam" id="NF002469">
    <property type="entry name" value="PRK01712.1"/>
    <property type="match status" value="1"/>
</dbReference>
<dbReference type="PANTHER" id="PTHR34984">
    <property type="entry name" value="CARBON STORAGE REGULATOR"/>
    <property type="match status" value="1"/>
</dbReference>
<dbReference type="PANTHER" id="PTHR34984:SF1">
    <property type="entry name" value="CARBON STORAGE REGULATOR"/>
    <property type="match status" value="1"/>
</dbReference>
<dbReference type="Pfam" id="PF02599">
    <property type="entry name" value="CsrA"/>
    <property type="match status" value="1"/>
</dbReference>
<dbReference type="SUPFAM" id="SSF117130">
    <property type="entry name" value="CsrA-like"/>
    <property type="match status" value="1"/>
</dbReference>
<proteinExistence type="inferred from homology"/>
<evidence type="ECO:0000255" key="1">
    <source>
        <dbReference type="HAMAP-Rule" id="MF_00167"/>
    </source>
</evidence>
<organism>
    <name type="scientific">Buchnera aphidicola subsp. Cinara cedri (strain Cc)</name>
    <dbReference type="NCBI Taxonomy" id="372461"/>
    <lineage>
        <taxon>Bacteria</taxon>
        <taxon>Pseudomonadati</taxon>
        <taxon>Pseudomonadota</taxon>
        <taxon>Gammaproteobacteria</taxon>
        <taxon>Enterobacterales</taxon>
        <taxon>Erwiniaceae</taxon>
        <taxon>Buchnera</taxon>
    </lineage>
</organism>
<reference key="1">
    <citation type="journal article" date="2006" name="Science">
        <title>A small microbial genome: the end of a long symbiotic relationship?</title>
        <authorList>
            <person name="Perez-Brocal V."/>
            <person name="Gil R."/>
            <person name="Ramos S."/>
            <person name="Lamelas A."/>
            <person name="Postigo M."/>
            <person name="Michelena J.M."/>
            <person name="Silva F.J."/>
            <person name="Moya A."/>
            <person name="Latorre A."/>
        </authorList>
    </citation>
    <scope>NUCLEOTIDE SEQUENCE [LARGE SCALE GENOMIC DNA]</scope>
    <source>
        <strain>Cc</strain>
    </source>
</reference>
<keyword id="KW-0010">Activator</keyword>
<keyword id="KW-0963">Cytoplasm</keyword>
<keyword id="KW-1185">Reference proteome</keyword>
<keyword id="KW-0678">Repressor</keyword>
<keyword id="KW-0694">RNA-binding</keyword>
<keyword id="KW-0810">Translation regulation</keyword>
<sequence length="59" mass="6723">MLILTRRIGETLIIGDEITVTLLGIKGNQIRVGINAPKKISVHREEIYKKIQLEKKNLL</sequence>
<comment type="function">
    <text evidence="1">A key translational regulator that binds mRNA to regulate translation initiation and/or mRNA stability. Mediates global changes in gene expression, shifting from rapid growth to stress survival by linking envelope stress, the stringent response and the catabolite repression systems. Usually binds in the 5'-UTR; binding at or near the Shine-Dalgarno sequence prevents ribosome-binding, repressing translation, binding elsewhere in the 5'-UTR can activate translation and/or stabilize the mRNA. Its function is antagonized by small RNA(s).</text>
</comment>
<comment type="subunit">
    <text evidence="1">Homodimer; the beta-strands of each monomer intercalate to form a hydrophobic core, while the alpha-helices form wings that extend away from the core.</text>
</comment>
<comment type="subcellular location">
    <subcellularLocation>
        <location evidence="1">Cytoplasm</location>
    </subcellularLocation>
</comment>
<comment type="similarity">
    <text evidence="1">Belongs to the CsrA/RsmA family.</text>
</comment>
<accession>Q057H7</accession>
<gene>
    <name evidence="1" type="primary">csrA</name>
    <name type="ordered locus">BCc_255</name>
</gene>
<protein>
    <recommendedName>
        <fullName evidence="1">Translational regulator CsrA</fullName>
    </recommendedName>
    <alternativeName>
        <fullName evidence="1">Carbon storage regulator</fullName>
    </alternativeName>
</protein>